<name>SAHH_CAUVC</name>
<dbReference type="EC" id="3.13.2.1" evidence="1"/>
<dbReference type="EMBL" id="AE005673">
    <property type="protein sequence ID" value="AAK22244.1"/>
    <property type="molecule type" value="Genomic_DNA"/>
</dbReference>
<dbReference type="PIR" id="H87280">
    <property type="entry name" value="H87280"/>
</dbReference>
<dbReference type="RefSeq" id="NP_419076.1">
    <property type="nucleotide sequence ID" value="NC_002696.2"/>
</dbReference>
<dbReference type="RefSeq" id="WP_010918146.1">
    <property type="nucleotide sequence ID" value="NC_002696.2"/>
</dbReference>
<dbReference type="SMR" id="Q9ABH0"/>
<dbReference type="STRING" id="190650.CC_0257"/>
<dbReference type="EnsemblBacteria" id="AAK22244">
    <property type="protein sequence ID" value="AAK22244"/>
    <property type="gene ID" value="CC_0257"/>
</dbReference>
<dbReference type="KEGG" id="ccr:CC_0257"/>
<dbReference type="PATRIC" id="fig|190650.5.peg.252"/>
<dbReference type="eggNOG" id="COG0499">
    <property type="taxonomic scope" value="Bacteria"/>
</dbReference>
<dbReference type="HOGENOM" id="CLU_025194_2_1_5"/>
<dbReference type="BioCyc" id="CAULO:CC0257-MONOMER"/>
<dbReference type="UniPathway" id="UPA00314">
    <property type="reaction ID" value="UER00076"/>
</dbReference>
<dbReference type="Proteomes" id="UP000001816">
    <property type="component" value="Chromosome"/>
</dbReference>
<dbReference type="GO" id="GO:0005829">
    <property type="term" value="C:cytosol"/>
    <property type="evidence" value="ECO:0007669"/>
    <property type="project" value="TreeGrafter"/>
</dbReference>
<dbReference type="GO" id="GO:0004013">
    <property type="term" value="F:adenosylhomocysteinase activity"/>
    <property type="evidence" value="ECO:0007669"/>
    <property type="project" value="UniProtKB-UniRule"/>
</dbReference>
<dbReference type="GO" id="GO:0071269">
    <property type="term" value="P:L-homocysteine biosynthetic process"/>
    <property type="evidence" value="ECO:0007669"/>
    <property type="project" value="UniProtKB-UniRule"/>
</dbReference>
<dbReference type="GO" id="GO:0006730">
    <property type="term" value="P:one-carbon metabolic process"/>
    <property type="evidence" value="ECO:0007669"/>
    <property type="project" value="UniProtKB-KW"/>
</dbReference>
<dbReference type="GO" id="GO:0033353">
    <property type="term" value="P:S-adenosylmethionine cycle"/>
    <property type="evidence" value="ECO:0007669"/>
    <property type="project" value="TreeGrafter"/>
</dbReference>
<dbReference type="CDD" id="cd00401">
    <property type="entry name" value="SAHH"/>
    <property type="match status" value="1"/>
</dbReference>
<dbReference type="FunFam" id="3.40.50.720:FF:000004">
    <property type="entry name" value="Adenosylhomocysteinase"/>
    <property type="match status" value="1"/>
</dbReference>
<dbReference type="Gene3D" id="3.40.50.1480">
    <property type="entry name" value="Adenosylhomocysteinase-like"/>
    <property type="match status" value="1"/>
</dbReference>
<dbReference type="Gene3D" id="3.40.50.720">
    <property type="entry name" value="NAD(P)-binding Rossmann-like Domain"/>
    <property type="match status" value="1"/>
</dbReference>
<dbReference type="HAMAP" id="MF_00563">
    <property type="entry name" value="AdoHcyase"/>
    <property type="match status" value="1"/>
</dbReference>
<dbReference type="InterPro" id="IPR042172">
    <property type="entry name" value="Adenosylhomocyst_ase-like_sf"/>
</dbReference>
<dbReference type="InterPro" id="IPR000043">
    <property type="entry name" value="Adenosylhomocysteinase-like"/>
</dbReference>
<dbReference type="InterPro" id="IPR015878">
    <property type="entry name" value="Ado_hCys_hydrolase_NAD-bd"/>
</dbReference>
<dbReference type="InterPro" id="IPR036291">
    <property type="entry name" value="NAD(P)-bd_dom_sf"/>
</dbReference>
<dbReference type="InterPro" id="IPR020082">
    <property type="entry name" value="S-Ado-L-homoCys_hydrolase_CS"/>
</dbReference>
<dbReference type="NCBIfam" id="TIGR00936">
    <property type="entry name" value="ahcY"/>
    <property type="match status" value="1"/>
</dbReference>
<dbReference type="NCBIfam" id="NF004005">
    <property type="entry name" value="PRK05476.2-3"/>
    <property type="match status" value="1"/>
</dbReference>
<dbReference type="PANTHER" id="PTHR23420">
    <property type="entry name" value="ADENOSYLHOMOCYSTEINASE"/>
    <property type="match status" value="1"/>
</dbReference>
<dbReference type="PANTHER" id="PTHR23420:SF0">
    <property type="entry name" value="ADENOSYLHOMOCYSTEINASE"/>
    <property type="match status" value="1"/>
</dbReference>
<dbReference type="Pfam" id="PF05221">
    <property type="entry name" value="AdoHcyase"/>
    <property type="match status" value="1"/>
</dbReference>
<dbReference type="Pfam" id="PF00670">
    <property type="entry name" value="AdoHcyase_NAD"/>
    <property type="match status" value="1"/>
</dbReference>
<dbReference type="PIRSF" id="PIRSF001109">
    <property type="entry name" value="Ad_hcy_hydrolase"/>
    <property type="match status" value="1"/>
</dbReference>
<dbReference type="SMART" id="SM00996">
    <property type="entry name" value="AdoHcyase"/>
    <property type="match status" value="1"/>
</dbReference>
<dbReference type="SMART" id="SM00997">
    <property type="entry name" value="AdoHcyase_NAD"/>
    <property type="match status" value="1"/>
</dbReference>
<dbReference type="SUPFAM" id="SSF52283">
    <property type="entry name" value="Formate/glycerate dehydrogenase catalytic domain-like"/>
    <property type="match status" value="1"/>
</dbReference>
<dbReference type="SUPFAM" id="SSF51735">
    <property type="entry name" value="NAD(P)-binding Rossmann-fold domains"/>
    <property type="match status" value="1"/>
</dbReference>
<dbReference type="PROSITE" id="PS00738">
    <property type="entry name" value="ADOHCYASE_1"/>
    <property type="match status" value="1"/>
</dbReference>
<dbReference type="PROSITE" id="PS00739">
    <property type="entry name" value="ADOHCYASE_2"/>
    <property type="match status" value="1"/>
</dbReference>
<proteinExistence type="inferred from homology"/>
<organism>
    <name type="scientific">Caulobacter vibrioides (strain ATCC 19089 / CIP 103742 / CB 15)</name>
    <name type="common">Caulobacter crescentus</name>
    <dbReference type="NCBI Taxonomy" id="190650"/>
    <lineage>
        <taxon>Bacteria</taxon>
        <taxon>Pseudomonadati</taxon>
        <taxon>Pseudomonadota</taxon>
        <taxon>Alphaproteobacteria</taxon>
        <taxon>Caulobacterales</taxon>
        <taxon>Caulobacteraceae</taxon>
        <taxon>Caulobacter</taxon>
    </lineage>
</organism>
<reference key="1">
    <citation type="journal article" date="2001" name="Proc. Natl. Acad. Sci. U.S.A.">
        <title>Complete genome sequence of Caulobacter crescentus.</title>
        <authorList>
            <person name="Nierman W.C."/>
            <person name="Feldblyum T.V."/>
            <person name="Laub M.T."/>
            <person name="Paulsen I.T."/>
            <person name="Nelson K.E."/>
            <person name="Eisen J.A."/>
            <person name="Heidelberg J.F."/>
            <person name="Alley M.R.K."/>
            <person name="Ohta N."/>
            <person name="Maddock J.R."/>
            <person name="Potocka I."/>
            <person name="Nelson W.C."/>
            <person name="Newton A."/>
            <person name="Stephens C."/>
            <person name="Phadke N.D."/>
            <person name="Ely B."/>
            <person name="DeBoy R.T."/>
            <person name="Dodson R.J."/>
            <person name="Durkin A.S."/>
            <person name="Gwinn M.L."/>
            <person name="Haft D.H."/>
            <person name="Kolonay J.F."/>
            <person name="Smit J."/>
            <person name="Craven M.B."/>
            <person name="Khouri H.M."/>
            <person name="Shetty J."/>
            <person name="Berry K.J."/>
            <person name="Utterback T.R."/>
            <person name="Tran K."/>
            <person name="Wolf A.M."/>
            <person name="Vamathevan J.J."/>
            <person name="Ermolaeva M.D."/>
            <person name="White O."/>
            <person name="Salzberg S.L."/>
            <person name="Venter J.C."/>
            <person name="Shapiro L."/>
            <person name="Fraser C.M."/>
        </authorList>
    </citation>
    <scope>NUCLEOTIDE SEQUENCE [LARGE SCALE GENOMIC DNA]</scope>
    <source>
        <strain>ATCC 19089 / CIP 103742 / CB 15</strain>
    </source>
</reference>
<feature type="chain" id="PRO_0000116955" description="Adenosylhomocysteinase">
    <location>
        <begin position="1"/>
        <end position="463"/>
    </location>
</feature>
<feature type="binding site" evidence="1">
    <location>
        <position position="54"/>
    </location>
    <ligand>
        <name>substrate</name>
    </ligand>
</feature>
<feature type="binding site" evidence="1">
    <location>
        <position position="129"/>
    </location>
    <ligand>
        <name>substrate</name>
    </ligand>
</feature>
<feature type="binding site" evidence="1">
    <location>
        <position position="189"/>
    </location>
    <ligand>
        <name>substrate</name>
    </ligand>
</feature>
<feature type="binding site" evidence="1">
    <location>
        <begin position="190"/>
        <end position="192"/>
    </location>
    <ligand>
        <name>NAD(+)</name>
        <dbReference type="ChEBI" id="CHEBI:57540"/>
    </ligand>
</feature>
<feature type="binding site" evidence="1">
    <location>
        <position position="219"/>
    </location>
    <ligand>
        <name>substrate</name>
    </ligand>
</feature>
<feature type="binding site" evidence="1">
    <location>
        <position position="223"/>
    </location>
    <ligand>
        <name>substrate</name>
    </ligand>
</feature>
<feature type="binding site" evidence="1">
    <location>
        <position position="224"/>
    </location>
    <ligand>
        <name>NAD(+)</name>
        <dbReference type="ChEBI" id="CHEBI:57540"/>
    </ligand>
</feature>
<feature type="binding site" evidence="1">
    <location>
        <begin position="253"/>
        <end position="258"/>
    </location>
    <ligand>
        <name>NAD(+)</name>
        <dbReference type="ChEBI" id="CHEBI:57540"/>
    </ligand>
</feature>
<feature type="binding site" evidence="1">
    <location>
        <position position="276"/>
    </location>
    <ligand>
        <name>NAD(+)</name>
        <dbReference type="ChEBI" id="CHEBI:57540"/>
    </ligand>
</feature>
<feature type="binding site" evidence="1">
    <location>
        <position position="311"/>
    </location>
    <ligand>
        <name>NAD(+)</name>
        <dbReference type="ChEBI" id="CHEBI:57540"/>
    </ligand>
</feature>
<feature type="binding site" evidence="1">
    <location>
        <begin position="332"/>
        <end position="334"/>
    </location>
    <ligand>
        <name>NAD(+)</name>
        <dbReference type="ChEBI" id="CHEBI:57540"/>
    </ligand>
</feature>
<feature type="binding site" evidence="1">
    <location>
        <position position="377"/>
    </location>
    <ligand>
        <name>NAD(+)</name>
        <dbReference type="ChEBI" id="CHEBI:57540"/>
    </ligand>
</feature>
<protein>
    <recommendedName>
        <fullName evidence="1">Adenosylhomocysteinase</fullName>
        <ecNumber evidence="1">3.13.2.1</ecNumber>
    </recommendedName>
    <alternativeName>
        <fullName evidence="1">S-adenosyl-L-homocysteine hydrolase</fullName>
        <shortName evidence="1">AdoHcyase</shortName>
    </alternativeName>
</protein>
<sequence>MADYIVKDISLADFGRKEIAIAETEMPGLMATRAEYGPQQILKGARIAGSLHMTIQTAVLIETLTALGAEVRWASCNIFSTQDHAAAAIAAAGVPVFAFKGENLVEYWEYAHKIFEWHDGGYPNLILDDGGDATLLCVLGPKAEKDPSILNNPQNEEEEALYAVMKKYLAEKPGFYSAIRAAIGGVSEETTTGVHRLYQMAQKDELPFPAINVNDSVTKSKFDNLYGCRESLVDAIRRGTDVMLSGKVAVVCGYGDVGKGSAASLRQGGARVIVTEVDPICALQAAMEGYEVQTLNDVADKADIFVTATGNKDVITVDDMRKMKNNAIVCNIGHFDSEIQIAGLRNFKWDEIKPQVHHVEFPDGKKLIVLSEGRLVNLGNATGHPSFVMSASFTNQTLAQIELWTNKAKYENQVYTLPKHLDEKVAFLHLEKLGAKLTTLRKDQADYIGVPEAGPFKPDHYRY</sequence>
<keyword id="KW-0963">Cytoplasm</keyword>
<keyword id="KW-0378">Hydrolase</keyword>
<keyword id="KW-0520">NAD</keyword>
<keyword id="KW-0554">One-carbon metabolism</keyword>
<keyword id="KW-1185">Reference proteome</keyword>
<comment type="function">
    <text evidence="1">May play a key role in the regulation of the intracellular concentration of adenosylhomocysteine.</text>
</comment>
<comment type="catalytic activity">
    <reaction evidence="1">
        <text>S-adenosyl-L-homocysteine + H2O = L-homocysteine + adenosine</text>
        <dbReference type="Rhea" id="RHEA:21708"/>
        <dbReference type="ChEBI" id="CHEBI:15377"/>
        <dbReference type="ChEBI" id="CHEBI:16335"/>
        <dbReference type="ChEBI" id="CHEBI:57856"/>
        <dbReference type="ChEBI" id="CHEBI:58199"/>
        <dbReference type="EC" id="3.13.2.1"/>
    </reaction>
</comment>
<comment type="cofactor">
    <cofactor evidence="1">
        <name>NAD(+)</name>
        <dbReference type="ChEBI" id="CHEBI:57540"/>
    </cofactor>
    <text evidence="1">Binds 1 NAD(+) per subunit.</text>
</comment>
<comment type="pathway">
    <text evidence="1">Amino-acid biosynthesis; L-homocysteine biosynthesis; L-homocysteine from S-adenosyl-L-homocysteine: step 1/1.</text>
</comment>
<comment type="subcellular location">
    <subcellularLocation>
        <location evidence="1">Cytoplasm</location>
    </subcellularLocation>
</comment>
<comment type="similarity">
    <text evidence="1">Belongs to the adenosylhomocysteinase family.</text>
</comment>
<accession>Q9ABH0</accession>
<gene>
    <name evidence="1" type="primary">ahcY</name>
    <name type="ordered locus">CC_0257</name>
</gene>
<evidence type="ECO:0000255" key="1">
    <source>
        <dbReference type="HAMAP-Rule" id="MF_00563"/>
    </source>
</evidence>